<feature type="chain" id="PRO_1000072355" description="Aspartate 1-decarboxylase beta chain" evidence="1">
    <location>
        <begin position="1"/>
        <end position="24"/>
    </location>
</feature>
<feature type="chain" id="PRO_1000072356" description="Aspartate 1-decarboxylase alpha chain" evidence="1">
    <location>
        <begin position="25"/>
        <end position="127"/>
    </location>
</feature>
<feature type="active site" description="Schiff-base intermediate with substrate; via pyruvic acid" evidence="1">
    <location>
        <position position="25"/>
    </location>
</feature>
<feature type="active site" description="Proton donor" evidence="1">
    <location>
        <position position="58"/>
    </location>
</feature>
<feature type="binding site" evidence="1">
    <location>
        <position position="57"/>
    </location>
    <ligand>
        <name>substrate</name>
    </ligand>
</feature>
<feature type="binding site" evidence="1">
    <location>
        <begin position="73"/>
        <end position="75"/>
    </location>
    <ligand>
        <name>substrate</name>
    </ligand>
</feature>
<feature type="modified residue" description="Pyruvic acid (Ser)" evidence="1">
    <location>
        <position position="25"/>
    </location>
</feature>
<gene>
    <name evidence="1" type="primary">panD</name>
    <name type="ordered locus">NWMN_2494</name>
</gene>
<proteinExistence type="inferred from homology"/>
<dbReference type="EC" id="4.1.1.11" evidence="1"/>
<dbReference type="EMBL" id="AP009351">
    <property type="protein sequence ID" value="BAF68766.1"/>
    <property type="molecule type" value="Genomic_DNA"/>
</dbReference>
<dbReference type="RefSeq" id="WP_000621532.1">
    <property type="nucleotide sequence ID" value="NZ_JBBIAE010000005.1"/>
</dbReference>
<dbReference type="SMR" id="A6QK84"/>
<dbReference type="GeneID" id="98346911"/>
<dbReference type="KEGG" id="sae:NWMN_2494"/>
<dbReference type="HOGENOM" id="CLU_115305_2_0_9"/>
<dbReference type="UniPathway" id="UPA00028">
    <property type="reaction ID" value="UER00002"/>
</dbReference>
<dbReference type="Proteomes" id="UP000006386">
    <property type="component" value="Chromosome"/>
</dbReference>
<dbReference type="GO" id="GO:0005829">
    <property type="term" value="C:cytosol"/>
    <property type="evidence" value="ECO:0007669"/>
    <property type="project" value="TreeGrafter"/>
</dbReference>
<dbReference type="GO" id="GO:0004068">
    <property type="term" value="F:aspartate 1-decarboxylase activity"/>
    <property type="evidence" value="ECO:0007669"/>
    <property type="project" value="UniProtKB-UniRule"/>
</dbReference>
<dbReference type="GO" id="GO:0006523">
    <property type="term" value="P:alanine biosynthetic process"/>
    <property type="evidence" value="ECO:0007669"/>
    <property type="project" value="InterPro"/>
</dbReference>
<dbReference type="GO" id="GO:0015940">
    <property type="term" value="P:pantothenate biosynthetic process"/>
    <property type="evidence" value="ECO:0007669"/>
    <property type="project" value="UniProtKB-UniRule"/>
</dbReference>
<dbReference type="CDD" id="cd06919">
    <property type="entry name" value="Asp_decarbox"/>
    <property type="match status" value="1"/>
</dbReference>
<dbReference type="Gene3D" id="2.40.40.20">
    <property type="match status" value="1"/>
</dbReference>
<dbReference type="HAMAP" id="MF_00446">
    <property type="entry name" value="PanD"/>
    <property type="match status" value="1"/>
</dbReference>
<dbReference type="InterPro" id="IPR009010">
    <property type="entry name" value="Asp_de-COase-like_dom_sf"/>
</dbReference>
<dbReference type="InterPro" id="IPR003190">
    <property type="entry name" value="Asp_decarbox"/>
</dbReference>
<dbReference type="NCBIfam" id="TIGR00223">
    <property type="entry name" value="panD"/>
    <property type="match status" value="1"/>
</dbReference>
<dbReference type="PANTHER" id="PTHR21012">
    <property type="entry name" value="ASPARTATE 1-DECARBOXYLASE"/>
    <property type="match status" value="1"/>
</dbReference>
<dbReference type="PANTHER" id="PTHR21012:SF0">
    <property type="entry name" value="ASPARTATE 1-DECARBOXYLASE"/>
    <property type="match status" value="1"/>
</dbReference>
<dbReference type="Pfam" id="PF02261">
    <property type="entry name" value="Asp_decarbox"/>
    <property type="match status" value="1"/>
</dbReference>
<dbReference type="PIRSF" id="PIRSF006246">
    <property type="entry name" value="Asp_decarbox"/>
    <property type="match status" value="1"/>
</dbReference>
<dbReference type="SUPFAM" id="SSF50692">
    <property type="entry name" value="ADC-like"/>
    <property type="match status" value="1"/>
</dbReference>
<sequence>MIRTMMNAKIHRARVTESNLNYVGSITIDSDILEAVDILPNEKVAIVNNNNGARFETYVIAGERGSGKICLNGAASRLVEVGDVVIIMTYAQLNEEEIKNHAPKVAVMNEDNVIIEMIHEKENTIVL</sequence>
<reference key="1">
    <citation type="journal article" date="2008" name="J. Bacteriol.">
        <title>Genome sequence of Staphylococcus aureus strain Newman and comparative analysis of staphylococcal genomes: polymorphism and evolution of two major pathogenicity islands.</title>
        <authorList>
            <person name="Baba T."/>
            <person name="Bae T."/>
            <person name="Schneewind O."/>
            <person name="Takeuchi F."/>
            <person name="Hiramatsu K."/>
        </authorList>
    </citation>
    <scope>NUCLEOTIDE SEQUENCE [LARGE SCALE GENOMIC DNA]</scope>
    <source>
        <strain>Newman</strain>
    </source>
</reference>
<accession>A6QK84</accession>
<keyword id="KW-0068">Autocatalytic cleavage</keyword>
<keyword id="KW-0963">Cytoplasm</keyword>
<keyword id="KW-0210">Decarboxylase</keyword>
<keyword id="KW-0456">Lyase</keyword>
<keyword id="KW-0566">Pantothenate biosynthesis</keyword>
<keyword id="KW-0670">Pyruvate</keyword>
<keyword id="KW-0704">Schiff base</keyword>
<keyword id="KW-0865">Zymogen</keyword>
<organism>
    <name type="scientific">Staphylococcus aureus (strain Newman)</name>
    <dbReference type="NCBI Taxonomy" id="426430"/>
    <lineage>
        <taxon>Bacteria</taxon>
        <taxon>Bacillati</taxon>
        <taxon>Bacillota</taxon>
        <taxon>Bacilli</taxon>
        <taxon>Bacillales</taxon>
        <taxon>Staphylococcaceae</taxon>
        <taxon>Staphylococcus</taxon>
    </lineage>
</organism>
<evidence type="ECO:0000255" key="1">
    <source>
        <dbReference type="HAMAP-Rule" id="MF_00446"/>
    </source>
</evidence>
<comment type="function">
    <text evidence="1">Catalyzes the pyruvoyl-dependent decarboxylation of aspartate to produce beta-alanine.</text>
</comment>
<comment type="catalytic activity">
    <reaction evidence="1">
        <text>L-aspartate + H(+) = beta-alanine + CO2</text>
        <dbReference type="Rhea" id="RHEA:19497"/>
        <dbReference type="ChEBI" id="CHEBI:15378"/>
        <dbReference type="ChEBI" id="CHEBI:16526"/>
        <dbReference type="ChEBI" id="CHEBI:29991"/>
        <dbReference type="ChEBI" id="CHEBI:57966"/>
        <dbReference type="EC" id="4.1.1.11"/>
    </reaction>
</comment>
<comment type="cofactor">
    <cofactor evidence="1">
        <name>pyruvate</name>
        <dbReference type="ChEBI" id="CHEBI:15361"/>
    </cofactor>
    <text evidence="1">Binds 1 pyruvoyl group covalently per subunit.</text>
</comment>
<comment type="pathway">
    <text evidence="1">Cofactor biosynthesis; (R)-pantothenate biosynthesis; beta-alanine from L-aspartate: step 1/1.</text>
</comment>
<comment type="subunit">
    <text evidence="1">Heterooctamer of four alpha and four beta subunits.</text>
</comment>
<comment type="subcellular location">
    <subcellularLocation>
        <location evidence="1">Cytoplasm</location>
    </subcellularLocation>
</comment>
<comment type="PTM">
    <text evidence="1">Is synthesized initially as an inactive proenzyme, which is activated by self-cleavage at a specific serine bond to produce a beta-subunit with a hydroxyl group at its C-terminus and an alpha-subunit with a pyruvoyl group at its N-terminus.</text>
</comment>
<comment type="similarity">
    <text evidence="1">Belongs to the PanD family.</text>
</comment>
<name>PAND_STAAE</name>
<protein>
    <recommendedName>
        <fullName evidence="1">Aspartate 1-decarboxylase</fullName>
        <ecNumber evidence="1">4.1.1.11</ecNumber>
    </recommendedName>
    <alternativeName>
        <fullName evidence="1">Aspartate alpha-decarboxylase</fullName>
    </alternativeName>
    <component>
        <recommendedName>
            <fullName evidence="1">Aspartate 1-decarboxylase beta chain</fullName>
        </recommendedName>
    </component>
    <component>
        <recommendedName>
            <fullName evidence="1">Aspartate 1-decarboxylase alpha chain</fullName>
        </recommendedName>
    </component>
</protein>